<accession>A0Q4C3</accession>
<name>PURA_FRATN</name>
<dbReference type="EC" id="6.3.4.4" evidence="1"/>
<dbReference type="EMBL" id="CP000439">
    <property type="protein sequence ID" value="ABK89088.1"/>
    <property type="molecule type" value="Genomic_DNA"/>
</dbReference>
<dbReference type="RefSeq" id="WP_003035232.1">
    <property type="nucleotide sequence ID" value="NZ_CP009633.1"/>
</dbReference>
<dbReference type="SMR" id="A0Q4C3"/>
<dbReference type="KEGG" id="ftn:FTN_0178"/>
<dbReference type="KEGG" id="ftx:AW25_22"/>
<dbReference type="BioCyc" id="FTUL401614:G1G75-183-MONOMER"/>
<dbReference type="UniPathway" id="UPA00075">
    <property type="reaction ID" value="UER00335"/>
</dbReference>
<dbReference type="Proteomes" id="UP000000762">
    <property type="component" value="Chromosome"/>
</dbReference>
<dbReference type="GO" id="GO:0005737">
    <property type="term" value="C:cytoplasm"/>
    <property type="evidence" value="ECO:0007669"/>
    <property type="project" value="UniProtKB-SubCell"/>
</dbReference>
<dbReference type="GO" id="GO:0004019">
    <property type="term" value="F:adenylosuccinate synthase activity"/>
    <property type="evidence" value="ECO:0007669"/>
    <property type="project" value="UniProtKB-UniRule"/>
</dbReference>
<dbReference type="GO" id="GO:0005525">
    <property type="term" value="F:GTP binding"/>
    <property type="evidence" value="ECO:0007669"/>
    <property type="project" value="UniProtKB-UniRule"/>
</dbReference>
<dbReference type="GO" id="GO:0000287">
    <property type="term" value="F:magnesium ion binding"/>
    <property type="evidence" value="ECO:0007669"/>
    <property type="project" value="UniProtKB-UniRule"/>
</dbReference>
<dbReference type="GO" id="GO:0044208">
    <property type="term" value="P:'de novo' AMP biosynthetic process"/>
    <property type="evidence" value="ECO:0007669"/>
    <property type="project" value="UniProtKB-UniRule"/>
</dbReference>
<dbReference type="GO" id="GO:0046040">
    <property type="term" value="P:IMP metabolic process"/>
    <property type="evidence" value="ECO:0007669"/>
    <property type="project" value="TreeGrafter"/>
</dbReference>
<dbReference type="CDD" id="cd03108">
    <property type="entry name" value="AdSS"/>
    <property type="match status" value="1"/>
</dbReference>
<dbReference type="FunFam" id="1.10.300.10:FF:000001">
    <property type="entry name" value="Adenylosuccinate synthetase"/>
    <property type="match status" value="1"/>
</dbReference>
<dbReference type="FunFam" id="3.90.170.10:FF:000001">
    <property type="entry name" value="Adenylosuccinate synthetase"/>
    <property type="match status" value="1"/>
</dbReference>
<dbReference type="Gene3D" id="3.40.440.10">
    <property type="entry name" value="Adenylosuccinate Synthetase, subunit A, domain 1"/>
    <property type="match status" value="1"/>
</dbReference>
<dbReference type="Gene3D" id="1.10.300.10">
    <property type="entry name" value="Adenylosuccinate Synthetase, subunit A, domain 2"/>
    <property type="match status" value="1"/>
</dbReference>
<dbReference type="Gene3D" id="3.90.170.10">
    <property type="entry name" value="Adenylosuccinate Synthetase, subunit A, domain 3"/>
    <property type="match status" value="1"/>
</dbReference>
<dbReference type="HAMAP" id="MF_00011">
    <property type="entry name" value="Adenylosucc_synth"/>
    <property type="match status" value="1"/>
</dbReference>
<dbReference type="InterPro" id="IPR018220">
    <property type="entry name" value="Adenylosuccin_syn_GTP-bd"/>
</dbReference>
<dbReference type="InterPro" id="IPR033128">
    <property type="entry name" value="Adenylosuccin_syn_Lys_AS"/>
</dbReference>
<dbReference type="InterPro" id="IPR042109">
    <property type="entry name" value="Adenylosuccinate_synth_dom1"/>
</dbReference>
<dbReference type="InterPro" id="IPR042110">
    <property type="entry name" value="Adenylosuccinate_synth_dom2"/>
</dbReference>
<dbReference type="InterPro" id="IPR042111">
    <property type="entry name" value="Adenylosuccinate_synth_dom3"/>
</dbReference>
<dbReference type="InterPro" id="IPR001114">
    <property type="entry name" value="Adenylosuccinate_synthetase"/>
</dbReference>
<dbReference type="InterPro" id="IPR027417">
    <property type="entry name" value="P-loop_NTPase"/>
</dbReference>
<dbReference type="NCBIfam" id="NF002223">
    <property type="entry name" value="PRK01117.1"/>
    <property type="match status" value="1"/>
</dbReference>
<dbReference type="NCBIfam" id="TIGR00184">
    <property type="entry name" value="purA"/>
    <property type="match status" value="1"/>
</dbReference>
<dbReference type="PANTHER" id="PTHR11846">
    <property type="entry name" value="ADENYLOSUCCINATE SYNTHETASE"/>
    <property type="match status" value="1"/>
</dbReference>
<dbReference type="PANTHER" id="PTHR11846:SF0">
    <property type="entry name" value="ADENYLOSUCCINATE SYNTHETASE"/>
    <property type="match status" value="1"/>
</dbReference>
<dbReference type="Pfam" id="PF00709">
    <property type="entry name" value="Adenylsucc_synt"/>
    <property type="match status" value="1"/>
</dbReference>
<dbReference type="SMART" id="SM00788">
    <property type="entry name" value="Adenylsucc_synt"/>
    <property type="match status" value="1"/>
</dbReference>
<dbReference type="SUPFAM" id="SSF52540">
    <property type="entry name" value="P-loop containing nucleoside triphosphate hydrolases"/>
    <property type="match status" value="1"/>
</dbReference>
<dbReference type="PROSITE" id="PS01266">
    <property type="entry name" value="ADENYLOSUCCIN_SYN_1"/>
    <property type="match status" value="1"/>
</dbReference>
<dbReference type="PROSITE" id="PS00513">
    <property type="entry name" value="ADENYLOSUCCIN_SYN_2"/>
    <property type="match status" value="1"/>
</dbReference>
<keyword id="KW-0963">Cytoplasm</keyword>
<keyword id="KW-0342">GTP-binding</keyword>
<keyword id="KW-0436">Ligase</keyword>
<keyword id="KW-0460">Magnesium</keyword>
<keyword id="KW-0479">Metal-binding</keyword>
<keyword id="KW-0547">Nucleotide-binding</keyword>
<keyword id="KW-0658">Purine biosynthesis</keyword>
<protein>
    <recommendedName>
        <fullName evidence="1">Adenylosuccinate synthetase</fullName>
        <shortName evidence="1">AMPSase</shortName>
        <shortName evidence="1">AdSS</shortName>
        <ecNumber evidence="1">6.3.4.4</ecNumber>
    </recommendedName>
    <alternativeName>
        <fullName evidence="1">IMP--aspartate ligase</fullName>
    </alternativeName>
</protein>
<organism>
    <name type="scientific">Francisella tularensis subsp. novicida (strain U112)</name>
    <dbReference type="NCBI Taxonomy" id="401614"/>
    <lineage>
        <taxon>Bacteria</taxon>
        <taxon>Pseudomonadati</taxon>
        <taxon>Pseudomonadota</taxon>
        <taxon>Gammaproteobacteria</taxon>
        <taxon>Thiotrichales</taxon>
        <taxon>Francisellaceae</taxon>
        <taxon>Francisella</taxon>
    </lineage>
</organism>
<comment type="function">
    <text evidence="1">Plays an important role in the de novo pathway of purine nucleotide biosynthesis. Catalyzes the first committed step in the biosynthesis of AMP from IMP.</text>
</comment>
<comment type="catalytic activity">
    <reaction evidence="1">
        <text>IMP + L-aspartate + GTP = N(6)-(1,2-dicarboxyethyl)-AMP + GDP + phosphate + 2 H(+)</text>
        <dbReference type="Rhea" id="RHEA:15753"/>
        <dbReference type="ChEBI" id="CHEBI:15378"/>
        <dbReference type="ChEBI" id="CHEBI:29991"/>
        <dbReference type="ChEBI" id="CHEBI:37565"/>
        <dbReference type="ChEBI" id="CHEBI:43474"/>
        <dbReference type="ChEBI" id="CHEBI:57567"/>
        <dbReference type="ChEBI" id="CHEBI:58053"/>
        <dbReference type="ChEBI" id="CHEBI:58189"/>
        <dbReference type="EC" id="6.3.4.4"/>
    </reaction>
</comment>
<comment type="cofactor">
    <cofactor evidence="1">
        <name>Mg(2+)</name>
        <dbReference type="ChEBI" id="CHEBI:18420"/>
    </cofactor>
    <text evidence="1">Binds 1 Mg(2+) ion per subunit.</text>
</comment>
<comment type="pathway">
    <text evidence="1">Purine metabolism; AMP biosynthesis via de novo pathway; AMP from IMP: step 1/2.</text>
</comment>
<comment type="subunit">
    <text evidence="1">Homodimer.</text>
</comment>
<comment type="subcellular location">
    <subcellularLocation>
        <location evidence="1">Cytoplasm</location>
    </subcellularLocation>
</comment>
<comment type="similarity">
    <text evidence="1">Belongs to the adenylosuccinate synthetase family.</text>
</comment>
<proteinExistence type="inferred from homology"/>
<evidence type="ECO:0000255" key="1">
    <source>
        <dbReference type="HAMAP-Rule" id="MF_00011"/>
    </source>
</evidence>
<gene>
    <name evidence="1" type="primary">purA</name>
    <name type="ordered locus">FTN_0178</name>
</gene>
<reference key="1">
    <citation type="journal article" date="2007" name="Genome Biol.">
        <title>Comparison of Francisella tularensis genomes reveals evolutionary events associated with the emergence of human pathogenic strains.</title>
        <authorList>
            <person name="Rohmer L."/>
            <person name="Fong C."/>
            <person name="Abmayr S."/>
            <person name="Wasnick M."/>
            <person name="Larson Freeman T.J."/>
            <person name="Radey M."/>
            <person name="Guina T."/>
            <person name="Svensson K."/>
            <person name="Hayden H.S."/>
            <person name="Jacobs M."/>
            <person name="Gallagher L.A."/>
            <person name="Manoil C."/>
            <person name="Ernst R.K."/>
            <person name="Drees B."/>
            <person name="Buckley D."/>
            <person name="Haugen E."/>
            <person name="Bovee D."/>
            <person name="Zhou Y."/>
            <person name="Chang J."/>
            <person name="Levy R."/>
            <person name="Lim R."/>
            <person name="Gillett W."/>
            <person name="Guenthener D."/>
            <person name="Kang A."/>
            <person name="Shaffer S.A."/>
            <person name="Taylor G."/>
            <person name="Chen J."/>
            <person name="Gallis B."/>
            <person name="D'Argenio D.A."/>
            <person name="Forsman M."/>
            <person name="Olson M.V."/>
            <person name="Goodlett D.R."/>
            <person name="Kaul R."/>
            <person name="Miller S.I."/>
            <person name="Brittnacher M.J."/>
        </authorList>
    </citation>
    <scope>NUCLEOTIDE SEQUENCE [LARGE SCALE GENOMIC DNA]</scope>
    <source>
        <strain>U112</strain>
    </source>
</reference>
<sequence>MSNIVIVGAQWGDEGKGKIADTLAEKADLVVRYQGGNNAGHTLVVNGKKTFLHLIPSGVLHQHTKCVIGHGVVLDPVALDEEITRLQATGIAISAENLFVSESCTIITSYHKLLDAVRESNTSEKIGTTGKGIGPAYEDKVSRKGIKFKHLFDKDVLRSRLAISLAEKETLFRDLYKVEYPTLEQEFDKLFALGQKLKQYAADTFSIIDQAIAAGKNVVYEGAQGVLLDVDYGTYPFVTSSNTSVAGVYSGATTAGHGLDHVIGITKAYTTRVGEGPFPTELFDDVGKFIQHKGGEIGVTTGRIRRCGWLDLPLLKYSAKCSNLTSIALTKVDVLSDMDTLKVCIGYKYEGREIYCAYPGIDLYKVEPILVEMEPFSINETVTKDNIPAALKTYLKTIENHVGIPISSLAYGPSREQILFFEDYFKKG</sequence>
<feature type="chain" id="PRO_1000000825" description="Adenylosuccinate synthetase">
    <location>
        <begin position="1"/>
        <end position="428"/>
    </location>
</feature>
<feature type="active site" description="Proton acceptor" evidence="1">
    <location>
        <position position="13"/>
    </location>
</feature>
<feature type="active site" description="Proton donor" evidence="1">
    <location>
        <position position="41"/>
    </location>
</feature>
<feature type="binding site" evidence="1">
    <location>
        <begin position="12"/>
        <end position="18"/>
    </location>
    <ligand>
        <name>GTP</name>
        <dbReference type="ChEBI" id="CHEBI:37565"/>
    </ligand>
</feature>
<feature type="binding site" description="in other chain" evidence="1">
    <location>
        <begin position="13"/>
        <end position="16"/>
    </location>
    <ligand>
        <name>IMP</name>
        <dbReference type="ChEBI" id="CHEBI:58053"/>
        <note>ligand shared between dimeric partners</note>
    </ligand>
</feature>
<feature type="binding site" evidence="1">
    <location>
        <position position="13"/>
    </location>
    <ligand>
        <name>Mg(2+)</name>
        <dbReference type="ChEBI" id="CHEBI:18420"/>
    </ligand>
</feature>
<feature type="binding site" description="in other chain" evidence="1">
    <location>
        <begin position="38"/>
        <end position="41"/>
    </location>
    <ligand>
        <name>IMP</name>
        <dbReference type="ChEBI" id="CHEBI:58053"/>
        <note>ligand shared between dimeric partners</note>
    </ligand>
</feature>
<feature type="binding site" evidence="1">
    <location>
        <begin position="40"/>
        <end position="42"/>
    </location>
    <ligand>
        <name>GTP</name>
        <dbReference type="ChEBI" id="CHEBI:37565"/>
    </ligand>
</feature>
<feature type="binding site" evidence="1">
    <location>
        <position position="40"/>
    </location>
    <ligand>
        <name>Mg(2+)</name>
        <dbReference type="ChEBI" id="CHEBI:18420"/>
    </ligand>
</feature>
<feature type="binding site" description="in other chain" evidence="1">
    <location>
        <position position="129"/>
    </location>
    <ligand>
        <name>IMP</name>
        <dbReference type="ChEBI" id="CHEBI:58053"/>
        <note>ligand shared between dimeric partners</note>
    </ligand>
</feature>
<feature type="binding site" evidence="1">
    <location>
        <position position="143"/>
    </location>
    <ligand>
        <name>IMP</name>
        <dbReference type="ChEBI" id="CHEBI:58053"/>
        <note>ligand shared between dimeric partners</note>
    </ligand>
</feature>
<feature type="binding site" description="in other chain" evidence="1">
    <location>
        <position position="224"/>
    </location>
    <ligand>
        <name>IMP</name>
        <dbReference type="ChEBI" id="CHEBI:58053"/>
        <note>ligand shared between dimeric partners</note>
    </ligand>
</feature>
<feature type="binding site" description="in other chain" evidence="1">
    <location>
        <position position="239"/>
    </location>
    <ligand>
        <name>IMP</name>
        <dbReference type="ChEBI" id="CHEBI:58053"/>
        <note>ligand shared between dimeric partners</note>
    </ligand>
</feature>
<feature type="binding site" evidence="1">
    <location>
        <begin position="299"/>
        <end position="305"/>
    </location>
    <ligand>
        <name>substrate</name>
    </ligand>
</feature>
<feature type="binding site" description="in other chain" evidence="1">
    <location>
        <position position="303"/>
    </location>
    <ligand>
        <name>IMP</name>
        <dbReference type="ChEBI" id="CHEBI:58053"/>
        <note>ligand shared between dimeric partners</note>
    </ligand>
</feature>
<feature type="binding site" evidence="1">
    <location>
        <position position="305"/>
    </location>
    <ligand>
        <name>GTP</name>
        <dbReference type="ChEBI" id="CHEBI:37565"/>
    </ligand>
</feature>
<feature type="binding site" evidence="1">
    <location>
        <begin position="331"/>
        <end position="333"/>
    </location>
    <ligand>
        <name>GTP</name>
        <dbReference type="ChEBI" id="CHEBI:37565"/>
    </ligand>
</feature>
<feature type="binding site" evidence="1">
    <location>
        <begin position="410"/>
        <end position="412"/>
    </location>
    <ligand>
        <name>GTP</name>
        <dbReference type="ChEBI" id="CHEBI:37565"/>
    </ligand>
</feature>